<gene>
    <name type="ordered locus">Psyr_1407</name>
</gene>
<proteinExistence type="inferred from homology"/>
<accession>Q4ZWL4</accession>
<dbReference type="EMBL" id="CP000075">
    <property type="protein sequence ID" value="AAY36458.1"/>
    <property type="molecule type" value="Genomic_DNA"/>
</dbReference>
<dbReference type="RefSeq" id="WP_003339485.1">
    <property type="nucleotide sequence ID" value="NC_007005.1"/>
</dbReference>
<dbReference type="RefSeq" id="YP_234496.1">
    <property type="nucleotide sequence ID" value="NC_007005.1"/>
</dbReference>
<dbReference type="SMR" id="Q4ZWL4"/>
<dbReference type="STRING" id="205918.Psyr_1407"/>
<dbReference type="KEGG" id="psb:Psyr_1407"/>
<dbReference type="PATRIC" id="fig|205918.7.peg.1443"/>
<dbReference type="eggNOG" id="COG0217">
    <property type="taxonomic scope" value="Bacteria"/>
</dbReference>
<dbReference type="HOGENOM" id="CLU_062974_2_2_6"/>
<dbReference type="OrthoDB" id="9781053at2"/>
<dbReference type="Proteomes" id="UP000000426">
    <property type="component" value="Chromosome"/>
</dbReference>
<dbReference type="GO" id="GO:0005829">
    <property type="term" value="C:cytosol"/>
    <property type="evidence" value="ECO:0007669"/>
    <property type="project" value="TreeGrafter"/>
</dbReference>
<dbReference type="GO" id="GO:0003677">
    <property type="term" value="F:DNA binding"/>
    <property type="evidence" value="ECO:0007669"/>
    <property type="project" value="UniProtKB-UniRule"/>
</dbReference>
<dbReference type="GO" id="GO:0006355">
    <property type="term" value="P:regulation of DNA-templated transcription"/>
    <property type="evidence" value="ECO:0007669"/>
    <property type="project" value="UniProtKB-UniRule"/>
</dbReference>
<dbReference type="FunFam" id="1.10.10.200:FF:000001">
    <property type="entry name" value="Probable transcriptional regulatory protein YebC"/>
    <property type="match status" value="1"/>
</dbReference>
<dbReference type="FunFam" id="3.30.70.980:FF:000002">
    <property type="entry name" value="Probable transcriptional regulatory protein YebC"/>
    <property type="match status" value="1"/>
</dbReference>
<dbReference type="Gene3D" id="1.10.10.200">
    <property type="match status" value="1"/>
</dbReference>
<dbReference type="Gene3D" id="3.30.70.980">
    <property type="match status" value="2"/>
</dbReference>
<dbReference type="HAMAP" id="MF_00693">
    <property type="entry name" value="Transcrip_reg_TACO1"/>
    <property type="match status" value="1"/>
</dbReference>
<dbReference type="InterPro" id="IPR017856">
    <property type="entry name" value="Integrase-like_N"/>
</dbReference>
<dbReference type="InterPro" id="IPR048300">
    <property type="entry name" value="TACO1_YebC-like_2nd/3rd_dom"/>
</dbReference>
<dbReference type="InterPro" id="IPR049083">
    <property type="entry name" value="TACO1_YebC_N"/>
</dbReference>
<dbReference type="InterPro" id="IPR002876">
    <property type="entry name" value="Transcrip_reg_TACO1-like"/>
</dbReference>
<dbReference type="InterPro" id="IPR026564">
    <property type="entry name" value="Transcrip_reg_TACO1-like_dom3"/>
</dbReference>
<dbReference type="InterPro" id="IPR029072">
    <property type="entry name" value="YebC-like"/>
</dbReference>
<dbReference type="NCBIfam" id="NF001030">
    <property type="entry name" value="PRK00110.1"/>
    <property type="match status" value="1"/>
</dbReference>
<dbReference type="NCBIfam" id="NF009044">
    <property type="entry name" value="PRK12378.1"/>
    <property type="match status" value="1"/>
</dbReference>
<dbReference type="NCBIfam" id="TIGR01033">
    <property type="entry name" value="YebC/PmpR family DNA-binding transcriptional regulator"/>
    <property type="match status" value="1"/>
</dbReference>
<dbReference type="PANTHER" id="PTHR12532:SF6">
    <property type="entry name" value="TRANSCRIPTIONAL REGULATORY PROTEIN YEBC-RELATED"/>
    <property type="match status" value="1"/>
</dbReference>
<dbReference type="PANTHER" id="PTHR12532">
    <property type="entry name" value="TRANSLATIONAL ACTIVATOR OF CYTOCHROME C OXIDASE 1"/>
    <property type="match status" value="1"/>
</dbReference>
<dbReference type="Pfam" id="PF20772">
    <property type="entry name" value="TACO1_YebC_N"/>
    <property type="match status" value="1"/>
</dbReference>
<dbReference type="Pfam" id="PF01709">
    <property type="entry name" value="Transcrip_reg"/>
    <property type="match status" value="1"/>
</dbReference>
<dbReference type="SUPFAM" id="SSF75625">
    <property type="entry name" value="YebC-like"/>
    <property type="match status" value="1"/>
</dbReference>
<protein>
    <recommendedName>
        <fullName evidence="1">Probable transcriptional regulatory protein Psyr_1407</fullName>
    </recommendedName>
</protein>
<organism>
    <name type="scientific">Pseudomonas syringae pv. syringae (strain B728a)</name>
    <dbReference type="NCBI Taxonomy" id="205918"/>
    <lineage>
        <taxon>Bacteria</taxon>
        <taxon>Pseudomonadati</taxon>
        <taxon>Pseudomonadota</taxon>
        <taxon>Gammaproteobacteria</taxon>
        <taxon>Pseudomonadales</taxon>
        <taxon>Pseudomonadaceae</taxon>
        <taxon>Pseudomonas</taxon>
        <taxon>Pseudomonas syringae</taxon>
    </lineage>
</organism>
<sequence>MAGHSKWANIKHRKERQDAKKGKIFTKWIRELTVAARQGGGDPGSNPRLRLALDKALGANMTRDTIDRAVARGVGASDGDDVEELGYEGYGPGGVAIMVETMTDNRNRTAAAVRHAFTKCGGNLGTDGSVAYLFDRKGQISFAAGVDEDSLIEAAMEADADDVVTNEDGSIDVFTSFSGFYAVRNALEAAGFKAADAEIVMLPTTSAVLDLETAEKVLKLIDMLEDLDDVQNVYSNAEIPDEVMEQLG</sequence>
<keyword id="KW-0963">Cytoplasm</keyword>
<keyword id="KW-0238">DNA-binding</keyword>
<keyword id="KW-0804">Transcription</keyword>
<keyword id="KW-0805">Transcription regulation</keyword>
<feature type="chain" id="PRO_0000257106" description="Probable transcriptional regulatory protein Psyr_1407">
    <location>
        <begin position="1"/>
        <end position="248"/>
    </location>
</feature>
<reference key="1">
    <citation type="journal article" date="2005" name="Proc. Natl. Acad. Sci. U.S.A.">
        <title>Comparison of the complete genome sequences of Pseudomonas syringae pv. syringae B728a and pv. tomato DC3000.</title>
        <authorList>
            <person name="Feil H."/>
            <person name="Feil W.S."/>
            <person name="Chain P."/>
            <person name="Larimer F."/>
            <person name="Dibartolo G."/>
            <person name="Copeland A."/>
            <person name="Lykidis A."/>
            <person name="Trong S."/>
            <person name="Nolan M."/>
            <person name="Goltsman E."/>
            <person name="Thiel J."/>
            <person name="Malfatti S."/>
            <person name="Loper J.E."/>
            <person name="Lapidus A."/>
            <person name="Detter J.C."/>
            <person name="Land M."/>
            <person name="Richardson P.M."/>
            <person name="Kyrpides N.C."/>
            <person name="Ivanova N."/>
            <person name="Lindow S.E."/>
        </authorList>
    </citation>
    <scope>NUCLEOTIDE SEQUENCE [LARGE SCALE GENOMIC DNA]</scope>
    <source>
        <strain>B728a</strain>
    </source>
</reference>
<name>Y1407_PSEU2</name>
<evidence type="ECO:0000255" key="1">
    <source>
        <dbReference type="HAMAP-Rule" id="MF_00693"/>
    </source>
</evidence>
<comment type="subcellular location">
    <subcellularLocation>
        <location evidence="1">Cytoplasm</location>
    </subcellularLocation>
</comment>
<comment type="similarity">
    <text evidence="1">Belongs to the TACO1 family.</text>
</comment>